<gene>
    <name evidence="7" type="primary">Cfap97</name>
    <name evidence="7" type="synonym">Kiaa1430</name>
</gene>
<reference key="1">
    <citation type="journal article" date="2003" name="DNA Res.">
        <title>Prediction of the coding sequences of mouse homologues of KIAA gene: III. The complete nucleotide sequences of 500 mouse KIAA-homologous cDNAs identified by screening of terminal sequences of cDNA clones randomly sampled from size-fractionated libraries.</title>
        <authorList>
            <person name="Okazaki N."/>
            <person name="Kikuno R."/>
            <person name="Ohara R."/>
            <person name="Inamoto S."/>
            <person name="Koseki H."/>
            <person name="Hiraoka S."/>
            <person name="Saga Y."/>
            <person name="Nagase T."/>
            <person name="Ohara O."/>
            <person name="Koga H."/>
        </authorList>
    </citation>
    <scope>NUCLEOTIDE SEQUENCE [LARGE SCALE MRNA]</scope>
    <source>
        <tissue>Embryonic tail</tissue>
    </source>
</reference>
<reference key="2">
    <citation type="journal article" date="2005" name="Science">
        <title>The transcriptional landscape of the mammalian genome.</title>
        <authorList>
            <person name="Carninci P."/>
            <person name="Kasukawa T."/>
            <person name="Katayama S."/>
            <person name="Gough J."/>
            <person name="Frith M.C."/>
            <person name="Maeda N."/>
            <person name="Oyama R."/>
            <person name="Ravasi T."/>
            <person name="Lenhard B."/>
            <person name="Wells C."/>
            <person name="Kodzius R."/>
            <person name="Shimokawa K."/>
            <person name="Bajic V.B."/>
            <person name="Brenner S.E."/>
            <person name="Batalov S."/>
            <person name="Forrest A.R."/>
            <person name="Zavolan M."/>
            <person name="Davis M.J."/>
            <person name="Wilming L.G."/>
            <person name="Aidinis V."/>
            <person name="Allen J.E."/>
            <person name="Ambesi-Impiombato A."/>
            <person name="Apweiler R."/>
            <person name="Aturaliya R.N."/>
            <person name="Bailey T.L."/>
            <person name="Bansal M."/>
            <person name="Baxter L."/>
            <person name="Beisel K.W."/>
            <person name="Bersano T."/>
            <person name="Bono H."/>
            <person name="Chalk A.M."/>
            <person name="Chiu K.P."/>
            <person name="Choudhary V."/>
            <person name="Christoffels A."/>
            <person name="Clutterbuck D.R."/>
            <person name="Crowe M.L."/>
            <person name="Dalla E."/>
            <person name="Dalrymple B.P."/>
            <person name="de Bono B."/>
            <person name="Della Gatta G."/>
            <person name="di Bernardo D."/>
            <person name="Down T."/>
            <person name="Engstrom P."/>
            <person name="Fagiolini M."/>
            <person name="Faulkner G."/>
            <person name="Fletcher C.F."/>
            <person name="Fukushima T."/>
            <person name="Furuno M."/>
            <person name="Futaki S."/>
            <person name="Gariboldi M."/>
            <person name="Georgii-Hemming P."/>
            <person name="Gingeras T.R."/>
            <person name="Gojobori T."/>
            <person name="Green R.E."/>
            <person name="Gustincich S."/>
            <person name="Harbers M."/>
            <person name="Hayashi Y."/>
            <person name="Hensch T.K."/>
            <person name="Hirokawa N."/>
            <person name="Hill D."/>
            <person name="Huminiecki L."/>
            <person name="Iacono M."/>
            <person name="Ikeo K."/>
            <person name="Iwama A."/>
            <person name="Ishikawa T."/>
            <person name="Jakt M."/>
            <person name="Kanapin A."/>
            <person name="Katoh M."/>
            <person name="Kawasawa Y."/>
            <person name="Kelso J."/>
            <person name="Kitamura H."/>
            <person name="Kitano H."/>
            <person name="Kollias G."/>
            <person name="Krishnan S.P."/>
            <person name="Kruger A."/>
            <person name="Kummerfeld S.K."/>
            <person name="Kurochkin I.V."/>
            <person name="Lareau L.F."/>
            <person name="Lazarevic D."/>
            <person name="Lipovich L."/>
            <person name="Liu J."/>
            <person name="Liuni S."/>
            <person name="McWilliam S."/>
            <person name="Madan Babu M."/>
            <person name="Madera M."/>
            <person name="Marchionni L."/>
            <person name="Matsuda H."/>
            <person name="Matsuzawa S."/>
            <person name="Miki H."/>
            <person name="Mignone F."/>
            <person name="Miyake S."/>
            <person name="Morris K."/>
            <person name="Mottagui-Tabar S."/>
            <person name="Mulder N."/>
            <person name="Nakano N."/>
            <person name="Nakauchi H."/>
            <person name="Ng P."/>
            <person name="Nilsson R."/>
            <person name="Nishiguchi S."/>
            <person name="Nishikawa S."/>
            <person name="Nori F."/>
            <person name="Ohara O."/>
            <person name="Okazaki Y."/>
            <person name="Orlando V."/>
            <person name="Pang K.C."/>
            <person name="Pavan W.J."/>
            <person name="Pavesi G."/>
            <person name="Pesole G."/>
            <person name="Petrovsky N."/>
            <person name="Piazza S."/>
            <person name="Reed J."/>
            <person name="Reid J.F."/>
            <person name="Ring B.Z."/>
            <person name="Ringwald M."/>
            <person name="Rost B."/>
            <person name="Ruan Y."/>
            <person name="Salzberg S.L."/>
            <person name="Sandelin A."/>
            <person name="Schneider C."/>
            <person name="Schoenbach C."/>
            <person name="Sekiguchi K."/>
            <person name="Semple C.A."/>
            <person name="Seno S."/>
            <person name="Sessa L."/>
            <person name="Sheng Y."/>
            <person name="Shibata Y."/>
            <person name="Shimada H."/>
            <person name="Shimada K."/>
            <person name="Silva D."/>
            <person name="Sinclair B."/>
            <person name="Sperling S."/>
            <person name="Stupka E."/>
            <person name="Sugiura K."/>
            <person name="Sultana R."/>
            <person name="Takenaka Y."/>
            <person name="Taki K."/>
            <person name="Tammoja K."/>
            <person name="Tan S.L."/>
            <person name="Tang S."/>
            <person name="Taylor M.S."/>
            <person name="Tegner J."/>
            <person name="Teichmann S.A."/>
            <person name="Ueda H.R."/>
            <person name="van Nimwegen E."/>
            <person name="Verardo R."/>
            <person name="Wei C.L."/>
            <person name="Yagi K."/>
            <person name="Yamanishi H."/>
            <person name="Zabarovsky E."/>
            <person name="Zhu S."/>
            <person name="Zimmer A."/>
            <person name="Hide W."/>
            <person name="Bult C."/>
            <person name="Grimmond S.M."/>
            <person name="Teasdale R.D."/>
            <person name="Liu E.T."/>
            <person name="Brusic V."/>
            <person name="Quackenbush J."/>
            <person name="Wahlestedt C."/>
            <person name="Mattick J.S."/>
            <person name="Hume D.A."/>
            <person name="Kai C."/>
            <person name="Sasaki D."/>
            <person name="Tomaru Y."/>
            <person name="Fukuda S."/>
            <person name="Kanamori-Katayama M."/>
            <person name="Suzuki M."/>
            <person name="Aoki J."/>
            <person name="Arakawa T."/>
            <person name="Iida J."/>
            <person name="Imamura K."/>
            <person name="Itoh M."/>
            <person name="Kato T."/>
            <person name="Kawaji H."/>
            <person name="Kawagashira N."/>
            <person name="Kawashima T."/>
            <person name="Kojima M."/>
            <person name="Kondo S."/>
            <person name="Konno H."/>
            <person name="Nakano K."/>
            <person name="Ninomiya N."/>
            <person name="Nishio T."/>
            <person name="Okada M."/>
            <person name="Plessy C."/>
            <person name="Shibata K."/>
            <person name="Shiraki T."/>
            <person name="Suzuki S."/>
            <person name="Tagami M."/>
            <person name="Waki K."/>
            <person name="Watahiki A."/>
            <person name="Okamura-Oho Y."/>
            <person name="Suzuki H."/>
            <person name="Kawai J."/>
            <person name="Hayashizaki Y."/>
        </authorList>
    </citation>
    <scope>NUCLEOTIDE SEQUENCE [LARGE SCALE MRNA]</scope>
    <source>
        <strain>C57BL/6J</strain>
        <tissue>Testis</tissue>
    </source>
</reference>
<reference key="3">
    <citation type="journal article" date="2004" name="Genome Res.">
        <title>The status, quality, and expansion of the NIH full-length cDNA project: the Mammalian Gene Collection (MGC).</title>
        <authorList>
            <consortium name="The MGC Project Team"/>
        </authorList>
    </citation>
    <scope>NUCLEOTIDE SEQUENCE [LARGE SCALE MRNA]</scope>
    <source>
        <strain>C57BL/6J</strain>
        <tissue>Brain</tissue>
    </source>
</reference>
<reference key="4">
    <citation type="journal article" date="2007" name="Proc. Natl. Acad. Sci. U.S.A.">
        <title>Large-scale phosphorylation analysis of mouse liver.</title>
        <authorList>
            <person name="Villen J."/>
            <person name="Beausoleil S.A."/>
            <person name="Gerber S.A."/>
            <person name="Gygi S.P."/>
        </authorList>
    </citation>
    <scope>PHOSPHORYLATION [LARGE SCALE ANALYSIS] AT SER-160 AND SER-161</scope>
    <scope>IDENTIFICATION BY MASS SPECTROMETRY [LARGE SCALE ANALYSIS]</scope>
    <source>
        <tissue>Liver</tissue>
    </source>
</reference>
<reference key="5">
    <citation type="journal article" date="2010" name="Cell">
        <title>A tissue-specific atlas of mouse protein phosphorylation and expression.</title>
        <authorList>
            <person name="Huttlin E.L."/>
            <person name="Jedrychowski M.P."/>
            <person name="Elias J.E."/>
            <person name="Goswami T."/>
            <person name="Rad R."/>
            <person name="Beausoleil S.A."/>
            <person name="Villen J."/>
            <person name="Haas W."/>
            <person name="Sowa M.E."/>
            <person name="Gygi S.P."/>
        </authorList>
    </citation>
    <scope>PHOSPHORYLATION [LARGE SCALE ANALYSIS] AT SER-8; SER-19; SER-160 AND SER-161</scope>
    <scope>IDENTIFICATION BY MASS SPECTROMETRY [LARGE SCALE ANALYSIS]</scope>
    <source>
        <tissue>Kidney</tissue>
        <tissue>Testis</tissue>
    </source>
</reference>
<reference key="6">
    <citation type="journal article" date="2020" name="PLoS Genet.">
        <title>Cfap97d1 is important for flagellar axoneme maintenance and male mouse fertility.</title>
        <authorList>
            <person name="Oura S."/>
            <person name="Kazi S."/>
            <person name="Savolainen A."/>
            <person name="Nozawa K."/>
            <person name="Castaneda J."/>
            <person name="Yu Z."/>
            <person name="Miyata H."/>
            <person name="Matzuk R.M."/>
            <person name="Hansen J.N."/>
            <person name="Wachten D."/>
            <person name="Matzuk M.M."/>
            <person name="Prunskaite-Hyyrylaeinen R."/>
        </authorList>
    </citation>
    <scope>TISSUE SPECIFICITY</scope>
</reference>
<keyword id="KW-0175">Coiled coil</keyword>
<keyword id="KW-0597">Phosphoprotein</keyword>
<keyword id="KW-1185">Reference proteome</keyword>
<evidence type="ECO:0000250" key="1">
    <source>
        <dbReference type="UniProtKB" id="Q66H34"/>
    </source>
</evidence>
<evidence type="ECO:0000250" key="2">
    <source>
        <dbReference type="UniProtKB" id="Q9P2B7"/>
    </source>
</evidence>
<evidence type="ECO:0000255" key="3"/>
<evidence type="ECO:0000256" key="4">
    <source>
        <dbReference type="SAM" id="MobiDB-lite"/>
    </source>
</evidence>
<evidence type="ECO:0000269" key="5">
    <source>
    </source>
</evidence>
<evidence type="ECO:0000305" key="6"/>
<evidence type="ECO:0000312" key="7">
    <source>
        <dbReference type="MGI" id="MGI:1914006"/>
    </source>
</evidence>
<evidence type="ECO:0007744" key="8">
    <source>
    </source>
</evidence>
<evidence type="ECO:0007744" key="9">
    <source>
    </source>
</evidence>
<feature type="chain" id="PRO_0000309225" description="Cilia- and flagella-associated protein 97" evidence="6">
    <location>
        <begin position="1"/>
        <end position="541"/>
    </location>
</feature>
<feature type="region of interest" description="Disordered" evidence="4">
    <location>
        <begin position="28"/>
        <end position="47"/>
    </location>
</feature>
<feature type="region of interest" description="Disordered" evidence="4">
    <location>
        <begin position="93"/>
        <end position="296"/>
    </location>
</feature>
<feature type="region of interest" description="Disordered" evidence="4">
    <location>
        <begin position="313"/>
        <end position="337"/>
    </location>
</feature>
<feature type="region of interest" description="Disordered" evidence="4">
    <location>
        <begin position="406"/>
        <end position="430"/>
    </location>
</feature>
<feature type="region of interest" description="Disordered" evidence="4">
    <location>
        <begin position="495"/>
        <end position="514"/>
    </location>
</feature>
<feature type="coiled-coil region" evidence="3">
    <location>
        <begin position="382"/>
        <end position="459"/>
    </location>
</feature>
<feature type="compositionally biased region" description="Basic and acidic residues" evidence="4">
    <location>
        <begin position="35"/>
        <end position="47"/>
    </location>
</feature>
<feature type="compositionally biased region" description="Basic and acidic residues" evidence="4">
    <location>
        <begin position="93"/>
        <end position="107"/>
    </location>
</feature>
<feature type="compositionally biased region" description="Basic and acidic residues" evidence="4">
    <location>
        <begin position="142"/>
        <end position="151"/>
    </location>
</feature>
<feature type="compositionally biased region" description="Acidic residues" evidence="4">
    <location>
        <begin position="152"/>
        <end position="161"/>
    </location>
</feature>
<feature type="compositionally biased region" description="Low complexity" evidence="4">
    <location>
        <begin position="176"/>
        <end position="201"/>
    </location>
</feature>
<feature type="compositionally biased region" description="Basic and acidic residues" evidence="4">
    <location>
        <begin position="207"/>
        <end position="218"/>
    </location>
</feature>
<feature type="compositionally biased region" description="Polar residues" evidence="4">
    <location>
        <begin position="219"/>
        <end position="232"/>
    </location>
</feature>
<feature type="compositionally biased region" description="Polar residues" evidence="4">
    <location>
        <begin position="240"/>
        <end position="250"/>
    </location>
</feature>
<feature type="compositionally biased region" description="Polar residues" evidence="4">
    <location>
        <begin position="267"/>
        <end position="277"/>
    </location>
</feature>
<feature type="compositionally biased region" description="Basic and acidic residues" evidence="4">
    <location>
        <begin position="287"/>
        <end position="296"/>
    </location>
</feature>
<feature type="compositionally biased region" description="Polar residues" evidence="4">
    <location>
        <begin position="503"/>
        <end position="513"/>
    </location>
</feature>
<feature type="modified residue" description="Phosphoserine" evidence="9">
    <location>
        <position position="8"/>
    </location>
</feature>
<feature type="modified residue" description="Phosphoserine" evidence="9">
    <location>
        <position position="19"/>
    </location>
</feature>
<feature type="modified residue" description="Phosphothreonine" evidence="2">
    <location>
        <position position="155"/>
    </location>
</feature>
<feature type="modified residue" description="Phosphoserine" evidence="8 9">
    <location>
        <position position="160"/>
    </location>
</feature>
<feature type="modified residue" description="Phosphoserine" evidence="8 9">
    <location>
        <position position="161"/>
    </location>
</feature>
<feature type="modified residue" description="Phosphoserine" evidence="2">
    <location>
        <position position="230"/>
    </location>
</feature>
<feature type="modified residue" description="Phosphoserine" evidence="1">
    <location>
        <position position="258"/>
    </location>
</feature>
<organism>
    <name type="scientific">Mus musculus</name>
    <name type="common">Mouse</name>
    <dbReference type="NCBI Taxonomy" id="10090"/>
    <lineage>
        <taxon>Eukaryota</taxon>
        <taxon>Metazoa</taxon>
        <taxon>Chordata</taxon>
        <taxon>Craniata</taxon>
        <taxon>Vertebrata</taxon>
        <taxon>Euteleostomi</taxon>
        <taxon>Mammalia</taxon>
        <taxon>Eutheria</taxon>
        <taxon>Euarchontoglires</taxon>
        <taxon>Glires</taxon>
        <taxon>Rodentia</taxon>
        <taxon>Myomorpha</taxon>
        <taxon>Muroidea</taxon>
        <taxon>Muridae</taxon>
        <taxon>Murinae</taxon>
        <taxon>Mus</taxon>
        <taxon>Mus</taxon>
    </lineage>
</organism>
<proteinExistence type="evidence at protein level"/>
<name>CFA97_MOUSE</name>
<dbReference type="EMBL" id="AK129358">
    <property type="protein sequence ID" value="BAC98168.1"/>
    <property type="status" value="ALT_INIT"/>
    <property type="molecule type" value="mRNA"/>
</dbReference>
<dbReference type="EMBL" id="AK016776">
    <property type="protein sequence ID" value="BAB30422.1"/>
    <property type="molecule type" value="mRNA"/>
</dbReference>
<dbReference type="EMBL" id="BC058092">
    <property type="protein sequence ID" value="AAH58092.1"/>
    <property type="molecule type" value="mRNA"/>
</dbReference>
<dbReference type="CCDS" id="CCDS22288.1"/>
<dbReference type="RefSeq" id="NP_001344144.1">
    <property type="nucleotide sequence ID" value="NM_001357215.2"/>
</dbReference>
<dbReference type="RefSeq" id="NP_001344145.1">
    <property type="nucleotide sequence ID" value="NM_001357216.2"/>
</dbReference>
<dbReference type="RefSeq" id="NP_001415395.1">
    <property type="nucleotide sequence ID" value="NM_001428466.1"/>
</dbReference>
<dbReference type="RefSeq" id="NP_001415396.1">
    <property type="nucleotide sequence ID" value="NM_001428467.1"/>
</dbReference>
<dbReference type="RefSeq" id="NP_001415397.1">
    <property type="nucleotide sequence ID" value="NM_001428468.1"/>
</dbReference>
<dbReference type="RefSeq" id="NP_001415398.1">
    <property type="nucleotide sequence ID" value="NM_001428469.1"/>
</dbReference>
<dbReference type="RefSeq" id="NP_080023.1">
    <property type="nucleotide sequence ID" value="NM_025747.5"/>
</dbReference>
<dbReference type="RefSeq" id="XP_006509539.2">
    <property type="nucleotide sequence ID" value="XM_006509476.3"/>
</dbReference>
<dbReference type="RefSeq" id="XP_006509540.1">
    <property type="nucleotide sequence ID" value="XM_006509477.3"/>
</dbReference>
<dbReference type="RefSeq" id="XP_006509541.1">
    <property type="nucleotide sequence ID" value="XM_006509478.3"/>
</dbReference>
<dbReference type="RefSeq" id="XP_006509542.1">
    <property type="nucleotide sequence ID" value="XM_006509479.2"/>
</dbReference>
<dbReference type="RefSeq" id="XP_006509543.1">
    <property type="nucleotide sequence ID" value="XM_006509480.2"/>
</dbReference>
<dbReference type="RefSeq" id="XP_006509544.1">
    <property type="nucleotide sequence ID" value="XM_006509481.2"/>
</dbReference>
<dbReference type="RefSeq" id="XP_006509545.1">
    <property type="nucleotide sequence ID" value="XM_006509482.3"/>
</dbReference>
<dbReference type="SMR" id="Q6ZPR1"/>
<dbReference type="FunCoup" id="Q6ZPR1">
    <property type="interactions" value="512"/>
</dbReference>
<dbReference type="STRING" id="10090.ENSMUSP00000034048"/>
<dbReference type="GlyGen" id="Q6ZPR1">
    <property type="glycosylation" value="2 sites"/>
</dbReference>
<dbReference type="iPTMnet" id="Q6ZPR1"/>
<dbReference type="PhosphoSitePlus" id="Q6ZPR1"/>
<dbReference type="PaxDb" id="10090-ENSMUSP00000106005"/>
<dbReference type="ProteomicsDB" id="281394"/>
<dbReference type="Pumba" id="Q6ZPR1"/>
<dbReference type="Antibodypedia" id="56002">
    <property type="antibodies" value="29 antibodies from 12 providers"/>
</dbReference>
<dbReference type="Ensembl" id="ENSMUST00000034048.13">
    <property type="protein sequence ID" value="ENSMUSP00000034048.7"/>
    <property type="gene ID" value="ENSMUSG00000031631.16"/>
</dbReference>
<dbReference type="Ensembl" id="ENSMUST00000164504.2">
    <property type="protein sequence ID" value="ENSMUSP00000133211.2"/>
    <property type="gene ID" value="ENSMUSG00000031631.16"/>
</dbReference>
<dbReference type="GeneID" id="66756"/>
<dbReference type="KEGG" id="mmu:66756"/>
<dbReference type="UCSC" id="uc009lpv.1">
    <property type="organism name" value="mouse"/>
</dbReference>
<dbReference type="AGR" id="MGI:1914006"/>
<dbReference type="CTD" id="57587"/>
<dbReference type="MGI" id="MGI:1914006">
    <property type="gene designation" value="Cfap97"/>
</dbReference>
<dbReference type="VEuPathDB" id="HostDB:ENSMUSG00000031631"/>
<dbReference type="eggNOG" id="ENOG502S0ZF">
    <property type="taxonomic scope" value="Eukaryota"/>
</dbReference>
<dbReference type="GeneTree" id="ENSGT00390000010356"/>
<dbReference type="HOGENOM" id="CLU_040301_1_0_1"/>
<dbReference type="InParanoid" id="Q6ZPR1"/>
<dbReference type="OMA" id="DEKCCEE"/>
<dbReference type="PhylomeDB" id="Q6ZPR1"/>
<dbReference type="BioGRID-ORCS" id="66756">
    <property type="hits" value="4 hits in 78 CRISPR screens"/>
</dbReference>
<dbReference type="ChiTaRS" id="Cfap97">
    <property type="organism name" value="mouse"/>
</dbReference>
<dbReference type="PRO" id="PR:Q6ZPR1"/>
<dbReference type="Proteomes" id="UP000000589">
    <property type="component" value="Chromosome 8"/>
</dbReference>
<dbReference type="RNAct" id="Q6ZPR1">
    <property type="molecule type" value="protein"/>
</dbReference>
<dbReference type="Bgee" id="ENSMUSG00000031631">
    <property type="expression patterns" value="Expressed in spermatocyte and 224 other cell types or tissues"/>
</dbReference>
<dbReference type="ExpressionAtlas" id="Q6ZPR1">
    <property type="expression patterns" value="baseline and differential"/>
</dbReference>
<dbReference type="InterPro" id="IPR038791">
    <property type="entry name" value="Cfap97/Hemingway"/>
</dbReference>
<dbReference type="InterPro" id="IPR029488">
    <property type="entry name" value="Hmw/CFAP97"/>
</dbReference>
<dbReference type="PANTHER" id="PTHR23035:SF1">
    <property type="entry name" value="CILIA- AND FLAGELLA-ASSOCIATED PROTEIN 97"/>
    <property type="match status" value="1"/>
</dbReference>
<dbReference type="PANTHER" id="PTHR23035">
    <property type="entry name" value="CILIA- AND FLAGELLA-ASSOCIATED PROTEIN 97-RELATED"/>
    <property type="match status" value="1"/>
</dbReference>
<dbReference type="Pfam" id="PF13879">
    <property type="entry name" value="Hmw_CFAP97"/>
    <property type="match status" value="1"/>
</dbReference>
<comment type="tissue specificity">
    <text evidence="5">Highly expressed in testis with lower levels detected in other tissues including lung, heart and kidney.</text>
</comment>
<comment type="similarity">
    <text evidence="6">Belongs to the CFAP97 family.</text>
</comment>
<comment type="sequence caution" evidence="6">
    <conflict type="erroneous initiation">
        <sequence resource="EMBL-CDS" id="BAC98168"/>
    </conflict>
</comment>
<accession>Q6ZPR1</accession>
<accession>Q9D462</accession>
<protein>
    <recommendedName>
        <fullName evidence="7">Cilia- and flagella-associated protein 97</fullName>
    </recommendedName>
</protein>
<sequence>MDRFGDISEGEVDHSFFDSDFEDAKKCESNSIFDKQNDDDLKEGINKDTKNVNLKFGVQNDHLKEKIDNNTENVNLKLGLQTTENYLTQKGNERKANFSSKEQHIENDPTQARSSSVLTSSRSKKSCDATKGHKLNLPVPDRIPKIVKGEDDYYTDGEESSDDGKKYVRSKSAKPSSNLKKNVSKKYSSSSLSSSSSRSNSDCSDMGSDRQRRSESHSSGKCVSSVTPSSPKQRCKSGRKSSAQPSSTKQKTGDYHESEGNVPDITPLSTPDVSPAQSLELGQPPDQKVKVKKQENVSRDVYEDAEALKNDSRCVKSAKRKEKHGQSFAPKSSVLDANLDRRSKQKVLHDTMDLNHLLKAFLQLDKKGPQKHHFEQPAIIPRKNYSFTREEVRQIDRENQRLLKELSRQAEKPGSKSTIPGRSIGHPPKLYHSALNRQREQQRIERENMALLKRLEAVKPTVGMKRSEQLMDYHRNMSYLNPSPSVRRVRSTLGHYSPLRGASRTSSATSGLSCKTDRSVLDTSNGFLLRPKPPNVRTAWL</sequence>